<sequence length="382" mass="40428">MELREEAWSPGPLDSEDQQMASHENPVDILIMDDDDVPSWPPTKLSPPQSAPPAGPPPRPRPPAPYICNECGKSFSHWSKLTRHQRTHTGERPNACADCGKTFSQSSHLVQHRRIHTGEKPYACLECGKRFSWSSNLMQHQRIHTGEKPYTCPDCGRSFTQSKSLAKHRRSHSGLKPFVCPRCGRGFSQPKSLARHLRLHPELSGPGVAAKVLAASVRRAKGPEEAVAADGEIAIPVGDGEGIIVVGAPGEGAAAAAAMAGAGAKAAGPRSRRAPAPKPYVCLECGKGFGHGAGLLAHQRAQHGDGLGAAGGEEPAHICVECGEGFVQGAALRRHKKIHAVGAPSVCSSCGQSYYRAGGEEEDDDDEAAGGRCPECRGGEGR</sequence>
<dbReference type="EMBL" id="AF000560">
    <property type="protein sequence ID" value="AAB58413.1"/>
    <property type="status" value="ALT_INIT"/>
    <property type="molecule type" value="mRNA"/>
</dbReference>
<dbReference type="EMBL" id="AC024580">
    <property type="status" value="NOT_ANNOTATED_CDS"/>
    <property type="molecule type" value="Genomic_DNA"/>
</dbReference>
<dbReference type="EMBL" id="KF573663">
    <property type="status" value="NOT_ANNOTATED_CDS"/>
    <property type="molecule type" value="Genomic_DNA"/>
</dbReference>
<dbReference type="EMBL" id="BC077728">
    <property type="protein sequence ID" value="AAH77728.1"/>
    <property type="molecule type" value="mRNA"/>
</dbReference>
<dbReference type="CCDS" id="CCDS42634.1"/>
<dbReference type="RefSeq" id="NP_001002836.2">
    <property type="nucleotide sequence ID" value="NM_001002836.4"/>
</dbReference>
<dbReference type="RefSeq" id="XP_011524747.1">
    <property type="nucleotide sequence ID" value="XM_011526445.2"/>
</dbReference>
<dbReference type="RefSeq" id="XP_047294120.1">
    <property type="nucleotide sequence ID" value="XM_047438164.1"/>
</dbReference>
<dbReference type="SMR" id="Q6DD87"/>
<dbReference type="BioGRID" id="125966">
    <property type="interactions" value="73"/>
</dbReference>
<dbReference type="FunCoup" id="Q6DD87">
    <property type="interactions" value="531"/>
</dbReference>
<dbReference type="IntAct" id="Q6DD87">
    <property type="interactions" value="13"/>
</dbReference>
<dbReference type="MINT" id="Q6DD87"/>
<dbReference type="STRING" id="9606.ENSP00000478557"/>
<dbReference type="iPTMnet" id="Q6DD87"/>
<dbReference type="PhosphoSitePlus" id="Q6DD87"/>
<dbReference type="BioMuta" id="ZNF787"/>
<dbReference type="DMDM" id="527504074"/>
<dbReference type="jPOST" id="Q6DD87"/>
<dbReference type="MassIVE" id="Q6DD87"/>
<dbReference type="PaxDb" id="9606-ENSP00000478557"/>
<dbReference type="PeptideAtlas" id="Q6DD87"/>
<dbReference type="ProteomicsDB" id="66222"/>
<dbReference type="Pumba" id="Q6DD87"/>
<dbReference type="Antibodypedia" id="33179">
    <property type="antibodies" value="88 antibodies from 16 providers"/>
</dbReference>
<dbReference type="DNASU" id="126208"/>
<dbReference type="Ensembl" id="ENST00000610935.2">
    <property type="protein sequence ID" value="ENSP00000478557.1"/>
    <property type="gene ID" value="ENSG00000142409.6"/>
</dbReference>
<dbReference type="GeneID" id="126208"/>
<dbReference type="KEGG" id="hsa:126208"/>
<dbReference type="MANE-Select" id="ENST00000610935.2">
    <property type="protein sequence ID" value="ENSP00000478557.1"/>
    <property type="RefSeq nucleotide sequence ID" value="NM_001002836.4"/>
    <property type="RefSeq protein sequence ID" value="NP_001002836.2"/>
</dbReference>
<dbReference type="AGR" id="HGNC:26998"/>
<dbReference type="CTD" id="126208"/>
<dbReference type="DisGeNET" id="126208"/>
<dbReference type="GeneCards" id="ZNF787"/>
<dbReference type="HGNC" id="HGNC:26998">
    <property type="gene designation" value="ZNF787"/>
</dbReference>
<dbReference type="HPA" id="ENSG00000142409">
    <property type="expression patterns" value="Low tissue specificity"/>
</dbReference>
<dbReference type="neXtProt" id="NX_Q6DD87"/>
<dbReference type="OpenTargets" id="ENSG00000142409"/>
<dbReference type="PharmGKB" id="PA162410481"/>
<dbReference type="VEuPathDB" id="HostDB:ENSG00000142409"/>
<dbReference type="eggNOG" id="KOG1721">
    <property type="taxonomic scope" value="Eukaryota"/>
</dbReference>
<dbReference type="GeneTree" id="ENSGT00940000163064"/>
<dbReference type="InParanoid" id="Q6DD87"/>
<dbReference type="OMA" id="PKPYVCM"/>
<dbReference type="OrthoDB" id="9439903at2759"/>
<dbReference type="PAN-GO" id="Q6DD87">
    <property type="GO annotations" value="4 GO annotations based on evolutionary models"/>
</dbReference>
<dbReference type="PhylomeDB" id="Q6DD87"/>
<dbReference type="TreeFam" id="TF337689"/>
<dbReference type="PathwayCommons" id="Q6DD87"/>
<dbReference type="SignaLink" id="Q6DD87"/>
<dbReference type="BioGRID-ORCS" id="126208">
    <property type="hits" value="24 hits in 1180 CRISPR screens"/>
</dbReference>
<dbReference type="ChiTaRS" id="ZNF787">
    <property type="organism name" value="human"/>
</dbReference>
<dbReference type="GenomeRNAi" id="126208"/>
<dbReference type="Pharos" id="Q6DD87">
    <property type="development level" value="Tdark"/>
</dbReference>
<dbReference type="PRO" id="PR:Q6DD87"/>
<dbReference type="Proteomes" id="UP000005640">
    <property type="component" value="Chromosome 19"/>
</dbReference>
<dbReference type="RNAct" id="Q6DD87">
    <property type="molecule type" value="protein"/>
</dbReference>
<dbReference type="Bgee" id="ENSG00000142409">
    <property type="expression patterns" value="Expressed in hindlimb stylopod muscle and 160 other cell types or tissues"/>
</dbReference>
<dbReference type="ExpressionAtlas" id="Q6DD87">
    <property type="expression patterns" value="baseline and differential"/>
</dbReference>
<dbReference type="GO" id="GO:0005634">
    <property type="term" value="C:nucleus"/>
    <property type="evidence" value="ECO:0000318"/>
    <property type="project" value="GO_Central"/>
</dbReference>
<dbReference type="GO" id="GO:0000981">
    <property type="term" value="F:DNA-binding transcription factor activity, RNA polymerase II-specific"/>
    <property type="evidence" value="ECO:0000318"/>
    <property type="project" value="GO_Central"/>
</dbReference>
<dbReference type="GO" id="GO:0043565">
    <property type="term" value="F:sequence-specific DNA binding"/>
    <property type="evidence" value="ECO:0000318"/>
    <property type="project" value="GO_Central"/>
</dbReference>
<dbReference type="GO" id="GO:1990837">
    <property type="term" value="F:sequence-specific double-stranded DNA binding"/>
    <property type="evidence" value="ECO:0000314"/>
    <property type="project" value="ARUK-UCL"/>
</dbReference>
<dbReference type="GO" id="GO:0008270">
    <property type="term" value="F:zinc ion binding"/>
    <property type="evidence" value="ECO:0007669"/>
    <property type="project" value="UniProtKB-KW"/>
</dbReference>
<dbReference type="GO" id="GO:0006357">
    <property type="term" value="P:regulation of transcription by RNA polymerase II"/>
    <property type="evidence" value="ECO:0000318"/>
    <property type="project" value="GO_Central"/>
</dbReference>
<dbReference type="FunFam" id="3.30.160.60:FF:001108">
    <property type="entry name" value="GLI family zinc finger 4"/>
    <property type="match status" value="1"/>
</dbReference>
<dbReference type="FunFam" id="3.30.160.60:FF:001497">
    <property type="entry name" value="Zinc finger protein 275"/>
    <property type="match status" value="1"/>
</dbReference>
<dbReference type="FunFam" id="3.30.160.60:FF:002090">
    <property type="entry name" value="Zinc finger protein 473"/>
    <property type="match status" value="1"/>
</dbReference>
<dbReference type="FunFam" id="3.30.160.60:FF:000180">
    <property type="entry name" value="Zinc finger protein 689"/>
    <property type="match status" value="1"/>
</dbReference>
<dbReference type="FunFam" id="3.30.160.60:FF:002431">
    <property type="entry name" value="Zinc finger protein 787"/>
    <property type="match status" value="1"/>
</dbReference>
<dbReference type="FunFam" id="3.30.160.60:FF:002586">
    <property type="entry name" value="Zinc finger protein 787"/>
    <property type="match status" value="1"/>
</dbReference>
<dbReference type="FunFam" id="3.30.160.60:FF:001724">
    <property type="entry name" value="zinc finger protein 787 isoform X2"/>
    <property type="match status" value="1"/>
</dbReference>
<dbReference type="Gene3D" id="3.30.160.60">
    <property type="entry name" value="Classic Zinc Finger"/>
    <property type="match status" value="7"/>
</dbReference>
<dbReference type="InterPro" id="IPR050527">
    <property type="entry name" value="Snail/Krueppel_Znf"/>
</dbReference>
<dbReference type="InterPro" id="IPR036236">
    <property type="entry name" value="Znf_C2H2_sf"/>
</dbReference>
<dbReference type="InterPro" id="IPR013087">
    <property type="entry name" value="Znf_C2H2_type"/>
</dbReference>
<dbReference type="PANTHER" id="PTHR24388">
    <property type="entry name" value="ZINC FINGER PROTEIN"/>
    <property type="match status" value="1"/>
</dbReference>
<dbReference type="PANTHER" id="PTHR24388:SF51">
    <property type="entry name" value="ZINC FINGER PROTEIN 281-RELATED"/>
    <property type="match status" value="1"/>
</dbReference>
<dbReference type="Pfam" id="PF00096">
    <property type="entry name" value="zf-C2H2"/>
    <property type="match status" value="3"/>
</dbReference>
<dbReference type="Pfam" id="PF13912">
    <property type="entry name" value="zf-C2H2_6"/>
    <property type="match status" value="1"/>
</dbReference>
<dbReference type="Pfam" id="PF13465">
    <property type="entry name" value="zf-H2C2_2"/>
    <property type="match status" value="1"/>
</dbReference>
<dbReference type="SMART" id="SM00355">
    <property type="entry name" value="ZnF_C2H2"/>
    <property type="match status" value="7"/>
</dbReference>
<dbReference type="SUPFAM" id="SSF57667">
    <property type="entry name" value="beta-beta-alpha zinc fingers"/>
    <property type="match status" value="5"/>
</dbReference>
<dbReference type="PROSITE" id="PS00028">
    <property type="entry name" value="ZINC_FINGER_C2H2_1"/>
    <property type="match status" value="7"/>
</dbReference>
<dbReference type="PROSITE" id="PS50157">
    <property type="entry name" value="ZINC_FINGER_C2H2_2"/>
    <property type="match status" value="7"/>
</dbReference>
<name>ZN787_HUMAN</name>
<gene>
    <name type="primary">ZNF787</name>
</gene>
<comment type="function">
    <text>May be involved in transcriptional regulation.</text>
</comment>
<comment type="subcellular location">
    <subcellularLocation>
        <location evidence="3">Nucleus</location>
    </subcellularLocation>
</comment>
<comment type="similarity">
    <text evidence="3">Belongs to the krueppel C2H2-type zinc-finger protein family.</text>
</comment>
<comment type="sequence caution" evidence="3">
    <conflict type="erroneous initiation">
        <sequence resource="EMBL-CDS" id="AAB58413"/>
    </conflict>
    <text>Extended N-terminus.</text>
</comment>
<organism>
    <name type="scientific">Homo sapiens</name>
    <name type="common">Human</name>
    <dbReference type="NCBI Taxonomy" id="9606"/>
    <lineage>
        <taxon>Eukaryota</taxon>
        <taxon>Metazoa</taxon>
        <taxon>Chordata</taxon>
        <taxon>Craniata</taxon>
        <taxon>Vertebrata</taxon>
        <taxon>Euteleostomi</taxon>
        <taxon>Mammalia</taxon>
        <taxon>Eutheria</taxon>
        <taxon>Euarchontoglires</taxon>
        <taxon>Primates</taxon>
        <taxon>Haplorrhini</taxon>
        <taxon>Catarrhini</taxon>
        <taxon>Hominidae</taxon>
        <taxon>Homo</taxon>
    </lineage>
</organism>
<reference key="1">
    <citation type="submission" date="1997-04" db="EMBL/GenBank/DDBJ databases">
        <authorList>
            <person name="Jansa P."/>
            <person name="Grummt I."/>
        </authorList>
    </citation>
    <scope>NUCLEOTIDE SEQUENCE [MRNA]</scope>
    <source>
        <tissue>Lung</tissue>
    </source>
</reference>
<reference key="2">
    <citation type="journal article" date="2004" name="Nature">
        <title>The DNA sequence and biology of human chromosome 19.</title>
        <authorList>
            <person name="Grimwood J."/>
            <person name="Gordon L.A."/>
            <person name="Olsen A.S."/>
            <person name="Terry A."/>
            <person name="Schmutz J."/>
            <person name="Lamerdin J.E."/>
            <person name="Hellsten U."/>
            <person name="Goodstein D."/>
            <person name="Couronne O."/>
            <person name="Tran-Gyamfi M."/>
            <person name="Aerts A."/>
            <person name="Altherr M."/>
            <person name="Ashworth L."/>
            <person name="Bajorek E."/>
            <person name="Black S."/>
            <person name="Branscomb E."/>
            <person name="Caenepeel S."/>
            <person name="Carrano A.V."/>
            <person name="Caoile C."/>
            <person name="Chan Y.M."/>
            <person name="Christensen M."/>
            <person name="Cleland C.A."/>
            <person name="Copeland A."/>
            <person name="Dalin E."/>
            <person name="Dehal P."/>
            <person name="Denys M."/>
            <person name="Detter J.C."/>
            <person name="Escobar J."/>
            <person name="Flowers D."/>
            <person name="Fotopulos D."/>
            <person name="Garcia C."/>
            <person name="Georgescu A.M."/>
            <person name="Glavina T."/>
            <person name="Gomez M."/>
            <person name="Gonzales E."/>
            <person name="Groza M."/>
            <person name="Hammon N."/>
            <person name="Hawkins T."/>
            <person name="Haydu L."/>
            <person name="Ho I."/>
            <person name="Huang W."/>
            <person name="Israni S."/>
            <person name="Jett J."/>
            <person name="Kadner K."/>
            <person name="Kimball H."/>
            <person name="Kobayashi A."/>
            <person name="Larionov V."/>
            <person name="Leem S.-H."/>
            <person name="Lopez F."/>
            <person name="Lou Y."/>
            <person name="Lowry S."/>
            <person name="Malfatti S."/>
            <person name="Martinez D."/>
            <person name="McCready P.M."/>
            <person name="Medina C."/>
            <person name="Morgan J."/>
            <person name="Nelson K."/>
            <person name="Nolan M."/>
            <person name="Ovcharenko I."/>
            <person name="Pitluck S."/>
            <person name="Pollard M."/>
            <person name="Popkie A.P."/>
            <person name="Predki P."/>
            <person name="Quan G."/>
            <person name="Ramirez L."/>
            <person name="Rash S."/>
            <person name="Retterer J."/>
            <person name="Rodriguez A."/>
            <person name="Rogers S."/>
            <person name="Salamov A."/>
            <person name="Salazar A."/>
            <person name="She X."/>
            <person name="Smith D."/>
            <person name="Slezak T."/>
            <person name="Solovyev V."/>
            <person name="Thayer N."/>
            <person name="Tice H."/>
            <person name="Tsai M."/>
            <person name="Ustaszewska A."/>
            <person name="Vo N."/>
            <person name="Wagner M."/>
            <person name="Wheeler J."/>
            <person name="Wu K."/>
            <person name="Xie G."/>
            <person name="Yang J."/>
            <person name="Dubchak I."/>
            <person name="Furey T.S."/>
            <person name="DeJong P."/>
            <person name="Dickson M."/>
            <person name="Gordon D."/>
            <person name="Eichler E.E."/>
            <person name="Pennacchio L.A."/>
            <person name="Richardson P."/>
            <person name="Stubbs L."/>
            <person name="Rokhsar D.S."/>
            <person name="Myers R.M."/>
            <person name="Rubin E.M."/>
            <person name="Lucas S.M."/>
        </authorList>
    </citation>
    <scope>NUCLEOTIDE SEQUENCE [LARGE SCALE GENOMIC DNA]</scope>
</reference>
<reference key="3">
    <citation type="journal article" date="2004" name="Genome Res.">
        <title>The status, quality, and expansion of the NIH full-length cDNA project: the Mammalian Gene Collection (MGC).</title>
        <authorList>
            <consortium name="The MGC Project Team"/>
        </authorList>
    </citation>
    <scope>NUCLEOTIDE SEQUENCE [LARGE SCALE MRNA]</scope>
    <source>
        <tissue>Pancreas</tissue>
    </source>
</reference>
<reference key="4">
    <citation type="journal article" date="2005" name="Nat. Biotechnol.">
        <title>Immunoaffinity profiling of tyrosine phosphorylation in cancer cells.</title>
        <authorList>
            <person name="Rush J."/>
            <person name="Moritz A."/>
            <person name="Lee K.A."/>
            <person name="Guo A."/>
            <person name="Goss V.L."/>
            <person name="Spek E.J."/>
            <person name="Zhang H."/>
            <person name="Zha X.-M."/>
            <person name="Polakiewicz R.D."/>
            <person name="Comb M.J."/>
        </authorList>
    </citation>
    <scope>PHOSPHORYLATION [LARGE SCALE ANALYSIS] AT TYR-122</scope>
    <scope>IDENTIFICATION BY MASS SPECTROMETRY [LARGE SCALE ANALYSIS]</scope>
</reference>
<reference key="5">
    <citation type="journal article" date="2008" name="Proc. Natl. Acad. Sci. U.S.A.">
        <title>A quantitative atlas of mitotic phosphorylation.</title>
        <authorList>
            <person name="Dephoure N."/>
            <person name="Zhou C."/>
            <person name="Villen J."/>
            <person name="Beausoleil S.A."/>
            <person name="Bakalarski C.E."/>
            <person name="Elledge S.J."/>
            <person name="Gygi S.P."/>
        </authorList>
    </citation>
    <scope>PHOSPHORYLATION [LARGE SCALE ANALYSIS] AT THR-117</scope>
    <scope>IDENTIFICATION BY MASS SPECTROMETRY [LARGE SCALE ANALYSIS]</scope>
    <source>
        <tissue>Cervix carcinoma</tissue>
    </source>
</reference>
<reference key="6">
    <citation type="journal article" date="2010" name="Sci. Signal.">
        <title>Quantitative phosphoproteomics reveals widespread full phosphorylation site occupancy during mitosis.</title>
        <authorList>
            <person name="Olsen J.V."/>
            <person name="Vermeulen M."/>
            <person name="Santamaria A."/>
            <person name="Kumar C."/>
            <person name="Miller M.L."/>
            <person name="Jensen L.J."/>
            <person name="Gnad F."/>
            <person name="Cox J."/>
            <person name="Jensen T.S."/>
            <person name="Nigg E.A."/>
            <person name="Brunak S."/>
            <person name="Mann M."/>
        </authorList>
    </citation>
    <scope>PHOSPHORYLATION [LARGE SCALE ANALYSIS] AT SER-132</scope>
    <scope>IDENTIFICATION BY MASS SPECTROMETRY [LARGE SCALE ANALYSIS]</scope>
    <source>
        <tissue>Cervix carcinoma</tissue>
    </source>
</reference>
<reference key="7">
    <citation type="journal article" date="2011" name="BMC Syst. Biol.">
        <title>Initial characterization of the human central proteome.</title>
        <authorList>
            <person name="Burkard T.R."/>
            <person name="Planyavsky M."/>
            <person name="Kaupe I."/>
            <person name="Breitwieser F.P."/>
            <person name="Buerckstuemmer T."/>
            <person name="Bennett K.L."/>
            <person name="Superti-Furga G."/>
            <person name="Colinge J."/>
        </authorList>
    </citation>
    <scope>IDENTIFICATION BY MASS SPECTROMETRY [LARGE SCALE ANALYSIS]</scope>
</reference>
<reference key="8">
    <citation type="journal article" date="2017" name="Nat. Struct. Mol. Biol.">
        <title>Site-specific mapping of the human SUMO proteome reveals co-modification with phosphorylation.</title>
        <authorList>
            <person name="Hendriks I.A."/>
            <person name="Lyon D."/>
            <person name="Young C."/>
            <person name="Jensen L.J."/>
            <person name="Vertegaal A.C."/>
            <person name="Nielsen M.L."/>
        </authorList>
    </citation>
    <scope>SUMOYLATION [LARGE SCALE ANALYSIS] AT LYS-191 AND LYS-211</scope>
    <scope>IDENTIFICATION BY MASS SPECTROMETRY [LARGE SCALE ANALYSIS]</scope>
</reference>
<proteinExistence type="evidence at protein level"/>
<accession>Q6DD87</accession>
<accession>A0A087WUD1</accession>
<accession>O00455</accession>
<evidence type="ECO:0000255" key="1">
    <source>
        <dbReference type="PROSITE-ProRule" id="PRU00042"/>
    </source>
</evidence>
<evidence type="ECO:0000256" key="2">
    <source>
        <dbReference type="SAM" id="MobiDB-lite"/>
    </source>
</evidence>
<evidence type="ECO:0000305" key="3"/>
<evidence type="ECO:0007744" key="4">
    <source>
    </source>
</evidence>
<evidence type="ECO:0007744" key="5">
    <source>
    </source>
</evidence>
<evidence type="ECO:0007744" key="6">
    <source>
    </source>
</evidence>
<evidence type="ECO:0007744" key="7">
    <source>
    </source>
</evidence>
<protein>
    <recommendedName>
        <fullName>Zinc finger protein 787</fullName>
    </recommendedName>
    <alternativeName>
        <fullName>TTF-I-interacting peptide 20</fullName>
    </alternativeName>
</protein>
<keyword id="KW-0238">DNA-binding</keyword>
<keyword id="KW-1017">Isopeptide bond</keyword>
<keyword id="KW-0479">Metal-binding</keyword>
<keyword id="KW-0539">Nucleus</keyword>
<keyword id="KW-0597">Phosphoprotein</keyword>
<keyword id="KW-1267">Proteomics identification</keyword>
<keyword id="KW-1185">Reference proteome</keyword>
<keyword id="KW-0677">Repeat</keyword>
<keyword id="KW-0804">Transcription</keyword>
<keyword id="KW-0805">Transcription regulation</keyword>
<keyword id="KW-0832">Ubl conjugation</keyword>
<keyword id="KW-0862">Zinc</keyword>
<keyword id="KW-0863">Zinc-finger</keyword>
<feature type="chain" id="PRO_0000287606" description="Zinc finger protein 787">
    <location>
        <begin position="1"/>
        <end position="381"/>
    </location>
</feature>
<feature type="zinc finger region" description="C2H2-type 1" evidence="1">
    <location>
        <begin position="66"/>
        <end position="88"/>
    </location>
</feature>
<feature type="zinc finger region" description="C2H2-type 2" evidence="1">
    <location>
        <begin position="94"/>
        <end position="116"/>
    </location>
</feature>
<feature type="zinc finger region" description="C2H2-type 3" evidence="1">
    <location>
        <begin position="122"/>
        <end position="144"/>
    </location>
</feature>
<feature type="zinc finger region" description="C2H2-type 4" evidence="1">
    <location>
        <begin position="150"/>
        <end position="172"/>
    </location>
</feature>
<feature type="zinc finger region" description="C2H2-type 5" evidence="1">
    <location>
        <begin position="178"/>
        <end position="200"/>
    </location>
</feature>
<feature type="zinc finger region" description="C2H2-type 6" evidence="1">
    <location>
        <begin position="280"/>
        <end position="303"/>
    </location>
</feature>
<feature type="zinc finger region" description="C2H2-type 7" evidence="1">
    <location>
        <begin position="317"/>
        <end position="339"/>
    </location>
</feature>
<feature type="region of interest" description="Disordered" evidence="2">
    <location>
        <begin position="1"/>
        <end position="65"/>
    </location>
</feature>
<feature type="region of interest" description="Disordered" evidence="2">
    <location>
        <begin position="357"/>
        <end position="382"/>
    </location>
</feature>
<feature type="compositionally biased region" description="Pro residues" evidence="2">
    <location>
        <begin position="39"/>
        <end position="65"/>
    </location>
</feature>
<feature type="modified residue" description="Phosphothreonine" evidence="5">
    <location>
        <position position="117"/>
    </location>
</feature>
<feature type="modified residue" description="Phosphotyrosine" evidence="4">
    <location>
        <position position="122"/>
    </location>
</feature>
<feature type="modified residue" description="Phosphoserine" evidence="6">
    <location>
        <position position="132"/>
    </location>
</feature>
<feature type="cross-link" description="Glycyl lysine isopeptide (Lys-Gly) (interchain with G-Cter in SUMO2)" evidence="7">
    <location>
        <position position="191"/>
    </location>
</feature>
<feature type="cross-link" description="Glycyl lysine isopeptide (Lys-Gly) (interchain with G-Cter in SUMO2)" evidence="7">
    <location>
        <position position="211"/>
    </location>
</feature>
<feature type="sequence variant" id="VAR_032336" description="In dbSNP:rs4077285.">
    <original>G</original>
    <variation>A</variation>
    <location>
        <position position="379"/>
    </location>
</feature>
<feature type="sequence conflict" description="In Ref. 2; AC024580." evidence="3" ref="2">
    <original>D</original>
    <variation>DD</variation>
    <location>
        <position position="363"/>
    </location>
</feature>
<feature type="sequence conflict" description="In Ref. 1; AAB58413 and 3; AAH77728." evidence="3" ref="1 3">
    <original>G</original>
    <variation>A</variation>
    <location>
        <position position="378"/>
    </location>
</feature>